<name>RL29_CAMJJ</name>
<comment type="similarity">
    <text evidence="1">Belongs to the universal ribosomal protein uL29 family.</text>
</comment>
<protein>
    <recommendedName>
        <fullName evidence="1">Large ribosomal subunit protein uL29</fullName>
    </recommendedName>
    <alternativeName>
        <fullName evidence="2">50S ribosomal protein L29</fullName>
    </alternativeName>
</protein>
<keyword id="KW-0687">Ribonucleoprotein</keyword>
<keyword id="KW-0689">Ribosomal protein</keyword>
<organism>
    <name type="scientific">Campylobacter jejuni subsp. jejuni serotype O:23/36 (strain 81-176)</name>
    <dbReference type="NCBI Taxonomy" id="354242"/>
    <lineage>
        <taxon>Bacteria</taxon>
        <taxon>Pseudomonadati</taxon>
        <taxon>Campylobacterota</taxon>
        <taxon>Epsilonproteobacteria</taxon>
        <taxon>Campylobacterales</taxon>
        <taxon>Campylobacteraceae</taxon>
        <taxon>Campylobacter</taxon>
    </lineage>
</organism>
<accession>A1W1V2</accession>
<dbReference type="EMBL" id="CP000538">
    <property type="protein sequence ID" value="EAQ72656.1"/>
    <property type="molecule type" value="Genomic_DNA"/>
</dbReference>
<dbReference type="RefSeq" id="WP_002851566.1">
    <property type="nucleotide sequence ID" value="NC_008787.1"/>
</dbReference>
<dbReference type="SMR" id="A1W1V2"/>
<dbReference type="KEGG" id="cjj:CJJ81176_1696"/>
<dbReference type="eggNOG" id="COG0255">
    <property type="taxonomic scope" value="Bacteria"/>
</dbReference>
<dbReference type="HOGENOM" id="CLU_158491_7_1_7"/>
<dbReference type="Proteomes" id="UP000000646">
    <property type="component" value="Chromosome"/>
</dbReference>
<dbReference type="GO" id="GO:1990904">
    <property type="term" value="C:ribonucleoprotein complex"/>
    <property type="evidence" value="ECO:0007669"/>
    <property type="project" value="UniProtKB-KW"/>
</dbReference>
<dbReference type="GO" id="GO:0005840">
    <property type="term" value="C:ribosome"/>
    <property type="evidence" value="ECO:0007669"/>
    <property type="project" value="UniProtKB-KW"/>
</dbReference>
<dbReference type="GO" id="GO:0003735">
    <property type="term" value="F:structural constituent of ribosome"/>
    <property type="evidence" value="ECO:0007669"/>
    <property type="project" value="InterPro"/>
</dbReference>
<dbReference type="GO" id="GO:0006412">
    <property type="term" value="P:translation"/>
    <property type="evidence" value="ECO:0007669"/>
    <property type="project" value="UniProtKB-UniRule"/>
</dbReference>
<dbReference type="CDD" id="cd00427">
    <property type="entry name" value="Ribosomal_L29_HIP"/>
    <property type="match status" value="1"/>
</dbReference>
<dbReference type="FunFam" id="1.10.287.310:FF:000007">
    <property type="entry name" value="50S ribosomal protein L29"/>
    <property type="match status" value="1"/>
</dbReference>
<dbReference type="Gene3D" id="1.10.287.310">
    <property type="match status" value="1"/>
</dbReference>
<dbReference type="HAMAP" id="MF_00374">
    <property type="entry name" value="Ribosomal_uL29"/>
    <property type="match status" value="1"/>
</dbReference>
<dbReference type="InterPro" id="IPR001854">
    <property type="entry name" value="Ribosomal_uL29"/>
</dbReference>
<dbReference type="InterPro" id="IPR018254">
    <property type="entry name" value="Ribosomal_uL29_CS"/>
</dbReference>
<dbReference type="InterPro" id="IPR036049">
    <property type="entry name" value="Ribosomal_uL29_sf"/>
</dbReference>
<dbReference type="NCBIfam" id="TIGR00012">
    <property type="entry name" value="L29"/>
    <property type="match status" value="1"/>
</dbReference>
<dbReference type="Pfam" id="PF00831">
    <property type="entry name" value="Ribosomal_L29"/>
    <property type="match status" value="1"/>
</dbReference>
<dbReference type="SUPFAM" id="SSF46561">
    <property type="entry name" value="Ribosomal protein L29 (L29p)"/>
    <property type="match status" value="1"/>
</dbReference>
<dbReference type="PROSITE" id="PS00579">
    <property type="entry name" value="RIBOSOMAL_L29"/>
    <property type="match status" value="1"/>
</dbReference>
<gene>
    <name evidence="1" type="primary">rpmC</name>
    <name type="ordered locus">CJJ81176_1696</name>
</gene>
<reference key="1">
    <citation type="submission" date="2006-12" db="EMBL/GenBank/DDBJ databases">
        <authorList>
            <person name="Fouts D.E."/>
            <person name="Nelson K.E."/>
            <person name="Sebastian Y."/>
        </authorList>
    </citation>
    <scope>NUCLEOTIDE SEQUENCE [LARGE SCALE GENOMIC DNA]</scope>
    <source>
        <strain>81-176</strain>
    </source>
</reference>
<feature type="chain" id="PRO_1000007451" description="Large ribosomal subunit protein uL29">
    <location>
        <begin position="1"/>
        <end position="61"/>
    </location>
</feature>
<sequence>MKYTEIKDKTAAELATMLKEKKVLLFTLKQKLKTMQLTNPKEISQVKKDIARINTAINALR</sequence>
<evidence type="ECO:0000255" key="1">
    <source>
        <dbReference type="HAMAP-Rule" id="MF_00374"/>
    </source>
</evidence>
<evidence type="ECO:0000305" key="2"/>
<proteinExistence type="inferred from homology"/>